<organism>
    <name type="scientific">Homo sapiens</name>
    <name type="common">Human</name>
    <dbReference type="NCBI Taxonomy" id="9606"/>
    <lineage>
        <taxon>Eukaryota</taxon>
        <taxon>Metazoa</taxon>
        <taxon>Chordata</taxon>
        <taxon>Craniata</taxon>
        <taxon>Vertebrata</taxon>
        <taxon>Euteleostomi</taxon>
        <taxon>Mammalia</taxon>
        <taxon>Eutheria</taxon>
        <taxon>Euarchontoglires</taxon>
        <taxon>Primates</taxon>
        <taxon>Haplorrhini</taxon>
        <taxon>Catarrhini</taxon>
        <taxon>Hominidae</taxon>
        <taxon>Homo</taxon>
    </lineage>
</organism>
<sequence length="87" mass="10134">MSTSVPQGHTWTQRVKKDDEEEDPLDQLISRSGCAASHFAVQECMAQHQDWRQCQPQVQAFKDCMSEQQARRQEELQRRQEQAGAHH</sequence>
<evidence type="ECO:0000250" key="1"/>
<evidence type="ECO:0000255" key="2">
    <source>
        <dbReference type="PROSITE-ProRule" id="PRU01150"/>
    </source>
</evidence>
<evidence type="ECO:0000256" key="3">
    <source>
        <dbReference type="SAM" id="MobiDB-lite"/>
    </source>
</evidence>
<evidence type="ECO:0000269" key="4">
    <source>
    </source>
</evidence>
<evidence type="ECO:0000269" key="5">
    <source>
    </source>
</evidence>
<evidence type="ECO:0000303" key="6">
    <source>
    </source>
</evidence>
<evidence type="ECO:0000303" key="7">
    <source>
    </source>
</evidence>
<evidence type="ECO:0000305" key="8"/>
<evidence type="ECO:0000305" key="9">
    <source>
    </source>
</evidence>
<comment type="function">
    <text evidence="1">Putative COX assembly factor.</text>
</comment>
<comment type="interaction">
    <interactant intactId="EBI-22303661">
        <id>Q9NYJ1</id>
    </interactant>
    <interactant intactId="EBI-2963275">
        <id>Q9Y6N1</id>
        <label>COX11</label>
    </interactant>
    <organismsDiffer>false</organismsDiffer>
    <experiments>2</experiments>
</comment>
<comment type="subcellular location">
    <subcellularLocation>
        <location evidence="5">Mitochondrion</location>
    </subcellularLocation>
</comment>
<comment type="alternative products">
    <event type="alternative splicing"/>
    <isoform>
        <id>Q9NYJ1-1</id>
        <name>1</name>
        <sequence type="displayed"/>
    </isoform>
    <isoform>
        <id>Q9NYJ1-2</id>
        <name>2</name>
        <sequence type="described" ref="VSP_030428"/>
    </isoform>
</comment>
<comment type="induction">
    <text evidence="4">Up-regulated by estrogen.</text>
</comment>
<comment type="similarity">
    <text evidence="8">Belongs to the COA4 family.</text>
</comment>
<feature type="chain" id="PRO_0000314908" description="Cytochrome c oxidase assembly factor 4 homolog, mitochondrial">
    <location>
        <begin position="1"/>
        <end position="87"/>
    </location>
</feature>
<feature type="domain" description="CHCH" evidence="2">
    <location>
        <begin position="31"/>
        <end position="72"/>
    </location>
</feature>
<feature type="region of interest" description="Disordered" evidence="3">
    <location>
        <begin position="1"/>
        <end position="25"/>
    </location>
</feature>
<feature type="region of interest" description="Disordered" evidence="3">
    <location>
        <begin position="68"/>
        <end position="87"/>
    </location>
</feature>
<feature type="short sequence motif" description="Cx9C motif 1" evidence="2">
    <location>
        <begin position="34"/>
        <end position="44"/>
    </location>
</feature>
<feature type="short sequence motif" description="Cx9C motif 2" evidence="2">
    <location>
        <begin position="54"/>
        <end position="64"/>
    </location>
</feature>
<feature type="compositionally biased region" description="Polar residues" evidence="3">
    <location>
        <begin position="1"/>
        <end position="13"/>
    </location>
</feature>
<feature type="compositionally biased region" description="Basic and acidic residues" evidence="3">
    <location>
        <begin position="69"/>
        <end position="81"/>
    </location>
</feature>
<feature type="disulfide bond" evidence="2 9">
    <location>
        <begin position="34"/>
        <end position="64"/>
    </location>
</feature>
<feature type="disulfide bond" evidence="2 9">
    <location>
        <begin position="44"/>
        <end position="54"/>
    </location>
</feature>
<feature type="splice variant" id="VSP_030428" description="In isoform 2." evidence="6 7">
    <original>M</original>
    <variation>MFYRLPIPRM</variation>
    <location>
        <position position="1"/>
    </location>
</feature>
<dbReference type="EMBL" id="AF242180">
    <property type="protein sequence ID" value="AAF60345.1"/>
    <property type="molecule type" value="mRNA"/>
</dbReference>
<dbReference type="EMBL" id="AK314104">
    <property type="protein sequence ID" value="BAG36797.1"/>
    <property type="molecule type" value="mRNA"/>
</dbReference>
<dbReference type="EMBL" id="AL359618">
    <property type="protein sequence ID" value="CAH10681.1"/>
    <property type="molecule type" value="mRNA"/>
</dbReference>
<dbReference type="EMBL" id="AP002770">
    <property type="status" value="NOT_ANNOTATED_CDS"/>
    <property type="molecule type" value="Genomic_DNA"/>
</dbReference>
<dbReference type="EMBL" id="CH471076">
    <property type="protein sequence ID" value="EAW74914.1"/>
    <property type="molecule type" value="Genomic_DNA"/>
</dbReference>
<dbReference type="EMBL" id="CH471076">
    <property type="protein sequence ID" value="EAW74916.1"/>
    <property type="molecule type" value="Genomic_DNA"/>
</dbReference>
<dbReference type="EMBL" id="BC106036">
    <property type="protein sequence ID" value="AAI06037.1"/>
    <property type="molecule type" value="mRNA"/>
</dbReference>
<dbReference type="CCDS" id="CCDS8225.1">
    <molecule id="Q9NYJ1-1"/>
</dbReference>
<dbReference type="RefSeq" id="NP_057649.2">
    <molecule id="Q9NYJ1-1"/>
    <property type="nucleotide sequence ID" value="NM_016565.2"/>
</dbReference>
<dbReference type="RefSeq" id="XP_016873372.1">
    <molecule id="Q9NYJ1-2"/>
    <property type="nucleotide sequence ID" value="XM_017017883.2"/>
</dbReference>
<dbReference type="RefSeq" id="XP_016873373.1">
    <molecule id="Q9NYJ1-1"/>
    <property type="nucleotide sequence ID" value="XM_017017884.2"/>
</dbReference>
<dbReference type="RefSeq" id="XP_054225034.1">
    <molecule id="Q9NYJ1-2"/>
    <property type="nucleotide sequence ID" value="XM_054369059.1"/>
</dbReference>
<dbReference type="RefSeq" id="XP_054225035.1">
    <molecule id="Q9NYJ1-1"/>
    <property type="nucleotide sequence ID" value="XM_054369060.1"/>
</dbReference>
<dbReference type="SMR" id="Q9NYJ1"/>
<dbReference type="BioGRID" id="119439">
    <property type="interactions" value="50"/>
</dbReference>
<dbReference type="FunCoup" id="Q9NYJ1">
    <property type="interactions" value="382"/>
</dbReference>
<dbReference type="IntAct" id="Q9NYJ1">
    <property type="interactions" value="4"/>
</dbReference>
<dbReference type="MINT" id="Q9NYJ1"/>
<dbReference type="STRING" id="9606.ENSP00000443795"/>
<dbReference type="iPTMnet" id="Q9NYJ1"/>
<dbReference type="PhosphoSitePlus" id="Q9NYJ1"/>
<dbReference type="BioMuta" id="COA4"/>
<dbReference type="DMDM" id="166201912"/>
<dbReference type="jPOST" id="Q9NYJ1"/>
<dbReference type="MassIVE" id="Q9NYJ1"/>
<dbReference type="PaxDb" id="9606-ENSP00000347919"/>
<dbReference type="PeptideAtlas" id="Q9NYJ1"/>
<dbReference type="ProteomicsDB" id="83235">
    <molecule id="Q9NYJ1-1"/>
</dbReference>
<dbReference type="ProteomicsDB" id="83236">
    <molecule id="Q9NYJ1-2"/>
</dbReference>
<dbReference type="Pumba" id="Q9NYJ1"/>
<dbReference type="Antibodypedia" id="50305">
    <property type="antibodies" value="95 antibodies from 17 providers"/>
</dbReference>
<dbReference type="DNASU" id="51287"/>
<dbReference type="Ensembl" id="ENST00000355693.5">
    <molecule id="Q9NYJ1-1"/>
    <property type="protein sequence ID" value="ENSP00000347919.4"/>
    <property type="gene ID" value="ENSG00000181924.8"/>
</dbReference>
<dbReference type="Ensembl" id="ENST00000537289.2">
    <molecule id="Q9NYJ1-1"/>
    <property type="protein sequence ID" value="ENSP00000437772.1"/>
    <property type="gene ID" value="ENSG00000181924.8"/>
</dbReference>
<dbReference type="Ensembl" id="ENST00000541455.1">
    <molecule id="Q9NYJ1-2"/>
    <property type="protein sequence ID" value="ENSP00000440756.1"/>
    <property type="gene ID" value="ENSG00000181924.8"/>
</dbReference>
<dbReference type="Ensembl" id="ENST00000545127.1">
    <molecule id="Q9NYJ1-1"/>
    <property type="protein sequence ID" value="ENSP00000443795.1"/>
    <property type="gene ID" value="ENSG00000181924.8"/>
</dbReference>
<dbReference type="GeneID" id="51287"/>
<dbReference type="KEGG" id="hsa:51287"/>
<dbReference type="MANE-Select" id="ENST00000355693.5">
    <property type="protein sequence ID" value="ENSP00000347919.4"/>
    <property type="RefSeq nucleotide sequence ID" value="NM_016565.3"/>
    <property type="RefSeq protein sequence ID" value="NP_057649.2"/>
</dbReference>
<dbReference type="UCSC" id="uc001ouj.4">
    <molecule id="Q9NYJ1-1"/>
    <property type="organism name" value="human"/>
</dbReference>
<dbReference type="AGR" id="HGNC:24604"/>
<dbReference type="CTD" id="51287"/>
<dbReference type="DisGeNET" id="51287"/>
<dbReference type="GeneCards" id="COA4"/>
<dbReference type="HGNC" id="HGNC:24604">
    <property type="gene designation" value="COA4"/>
</dbReference>
<dbReference type="HPA" id="ENSG00000181924">
    <property type="expression patterns" value="Low tissue specificity"/>
</dbReference>
<dbReference type="MalaCards" id="COA4"/>
<dbReference type="MIM" id="608016">
    <property type="type" value="gene"/>
</dbReference>
<dbReference type="neXtProt" id="NX_Q9NYJ1"/>
<dbReference type="OpenTargets" id="ENSG00000181924"/>
<dbReference type="PharmGKB" id="PA142672121"/>
<dbReference type="VEuPathDB" id="HostDB:ENSG00000181924"/>
<dbReference type="eggNOG" id="KOG4138">
    <property type="taxonomic scope" value="Eukaryota"/>
</dbReference>
<dbReference type="GeneTree" id="ENSGT00390000008503"/>
<dbReference type="HOGENOM" id="CLU_169171_2_0_1"/>
<dbReference type="InParanoid" id="Q9NYJ1"/>
<dbReference type="OMA" id="MIARTGC"/>
<dbReference type="OrthoDB" id="5586401at2759"/>
<dbReference type="PAN-GO" id="Q9NYJ1">
    <property type="GO annotations" value="1 GO annotation based on evolutionary models"/>
</dbReference>
<dbReference type="PhylomeDB" id="Q9NYJ1"/>
<dbReference type="TreeFam" id="TF328624"/>
<dbReference type="PathwayCommons" id="Q9NYJ1"/>
<dbReference type="Reactome" id="R-HSA-1268020">
    <property type="pathway name" value="Mitochondrial protein import"/>
</dbReference>
<dbReference type="SignaLink" id="Q9NYJ1"/>
<dbReference type="BioGRID-ORCS" id="51287">
    <property type="hits" value="21 hits in 1160 CRISPR screens"/>
</dbReference>
<dbReference type="ChiTaRS" id="COA4">
    <property type="organism name" value="human"/>
</dbReference>
<dbReference type="GenomeRNAi" id="51287"/>
<dbReference type="Pharos" id="Q9NYJ1">
    <property type="development level" value="Tbio"/>
</dbReference>
<dbReference type="PRO" id="PR:Q9NYJ1"/>
<dbReference type="Proteomes" id="UP000005640">
    <property type="component" value="Chromosome 11"/>
</dbReference>
<dbReference type="RNAct" id="Q9NYJ1">
    <property type="molecule type" value="protein"/>
</dbReference>
<dbReference type="Bgee" id="ENSG00000181924">
    <property type="expression patterns" value="Expressed in right adrenal gland and 204 other cell types or tissues"/>
</dbReference>
<dbReference type="ExpressionAtlas" id="Q9NYJ1">
    <property type="expression patterns" value="baseline and differential"/>
</dbReference>
<dbReference type="GO" id="GO:0005758">
    <property type="term" value="C:mitochondrial intermembrane space"/>
    <property type="evidence" value="ECO:0000318"/>
    <property type="project" value="GO_Central"/>
</dbReference>
<dbReference type="GO" id="GO:0005739">
    <property type="term" value="C:mitochondrion"/>
    <property type="evidence" value="ECO:0000314"/>
    <property type="project" value="UniProtKB"/>
</dbReference>
<dbReference type="GO" id="GO:0033617">
    <property type="term" value="P:mitochondrial cytochrome c oxidase assembly"/>
    <property type="evidence" value="ECO:0007669"/>
    <property type="project" value="InterPro"/>
</dbReference>
<dbReference type="InterPro" id="IPR010625">
    <property type="entry name" value="CHCH"/>
</dbReference>
<dbReference type="InterPro" id="IPR039870">
    <property type="entry name" value="Coa4-like"/>
</dbReference>
<dbReference type="PANTHER" id="PTHR13639">
    <property type="entry name" value="CYTOCHROME C OXIDASE ASSEMBLY FACTOR 4 HOMOLOG, MITOCHONDRIAL"/>
    <property type="match status" value="1"/>
</dbReference>
<dbReference type="PANTHER" id="PTHR13639:SF2">
    <property type="entry name" value="CYTOCHROME C OXIDASE ASSEMBLY FACTOR 4 HOMOLOG, MITOCHONDRIAL"/>
    <property type="match status" value="1"/>
</dbReference>
<dbReference type="Pfam" id="PF06747">
    <property type="entry name" value="CHCH"/>
    <property type="match status" value="1"/>
</dbReference>
<dbReference type="PROSITE" id="PS51808">
    <property type="entry name" value="CHCH"/>
    <property type="match status" value="1"/>
</dbReference>
<gene>
    <name type="primary">COA4</name>
    <name type="synonym">CHCHD8</name>
    <name type="synonym">E2IG2</name>
</gene>
<name>COA4_HUMAN</name>
<accession>Q9NYJ1</accession>
<accession>B2RAA0</accession>
<accession>Q69YU4</accession>
<proteinExistence type="evidence at protein level"/>
<reference key="1">
    <citation type="journal article" date="2000" name="Cancer Res.">
        <title>Effects of estrogen on global gene expression: identification of novel targets of estrogen action.</title>
        <authorList>
            <person name="Charpentier A.H."/>
            <person name="Bednarek A.K."/>
            <person name="Daniel R.L."/>
            <person name="Hawkins K.A."/>
            <person name="Laflin K.J."/>
            <person name="Gaddis S."/>
            <person name="MacLeod M.C."/>
            <person name="Aldaz C.M."/>
        </authorList>
    </citation>
    <scope>NUCLEOTIDE SEQUENCE [MRNA] (ISOFORM 2)</scope>
    <scope>INDUCTION</scope>
    <source>
        <tissue>Mammary cancer</tissue>
    </source>
</reference>
<reference key="2">
    <citation type="journal article" date="2004" name="Nat. Genet.">
        <title>Complete sequencing and characterization of 21,243 full-length human cDNAs.</title>
        <authorList>
            <person name="Ota T."/>
            <person name="Suzuki Y."/>
            <person name="Nishikawa T."/>
            <person name="Otsuki T."/>
            <person name="Sugiyama T."/>
            <person name="Irie R."/>
            <person name="Wakamatsu A."/>
            <person name="Hayashi K."/>
            <person name="Sato H."/>
            <person name="Nagai K."/>
            <person name="Kimura K."/>
            <person name="Makita H."/>
            <person name="Sekine M."/>
            <person name="Obayashi M."/>
            <person name="Nishi T."/>
            <person name="Shibahara T."/>
            <person name="Tanaka T."/>
            <person name="Ishii S."/>
            <person name="Yamamoto J."/>
            <person name="Saito K."/>
            <person name="Kawai Y."/>
            <person name="Isono Y."/>
            <person name="Nakamura Y."/>
            <person name="Nagahari K."/>
            <person name="Murakami K."/>
            <person name="Yasuda T."/>
            <person name="Iwayanagi T."/>
            <person name="Wagatsuma M."/>
            <person name="Shiratori A."/>
            <person name="Sudo H."/>
            <person name="Hosoiri T."/>
            <person name="Kaku Y."/>
            <person name="Kodaira H."/>
            <person name="Kondo H."/>
            <person name="Sugawara M."/>
            <person name="Takahashi M."/>
            <person name="Kanda K."/>
            <person name="Yokoi T."/>
            <person name="Furuya T."/>
            <person name="Kikkawa E."/>
            <person name="Omura Y."/>
            <person name="Abe K."/>
            <person name="Kamihara K."/>
            <person name="Katsuta N."/>
            <person name="Sato K."/>
            <person name="Tanikawa M."/>
            <person name="Yamazaki M."/>
            <person name="Ninomiya K."/>
            <person name="Ishibashi T."/>
            <person name="Yamashita H."/>
            <person name="Murakawa K."/>
            <person name="Fujimori K."/>
            <person name="Tanai H."/>
            <person name="Kimata M."/>
            <person name="Watanabe M."/>
            <person name="Hiraoka S."/>
            <person name="Chiba Y."/>
            <person name="Ishida S."/>
            <person name="Ono Y."/>
            <person name="Takiguchi S."/>
            <person name="Watanabe S."/>
            <person name="Yosida M."/>
            <person name="Hotuta T."/>
            <person name="Kusano J."/>
            <person name="Kanehori K."/>
            <person name="Takahashi-Fujii A."/>
            <person name="Hara H."/>
            <person name="Tanase T.-O."/>
            <person name="Nomura Y."/>
            <person name="Togiya S."/>
            <person name="Komai F."/>
            <person name="Hara R."/>
            <person name="Takeuchi K."/>
            <person name="Arita M."/>
            <person name="Imose N."/>
            <person name="Musashino K."/>
            <person name="Yuuki H."/>
            <person name="Oshima A."/>
            <person name="Sasaki N."/>
            <person name="Aotsuka S."/>
            <person name="Yoshikawa Y."/>
            <person name="Matsunawa H."/>
            <person name="Ichihara T."/>
            <person name="Shiohata N."/>
            <person name="Sano S."/>
            <person name="Moriya S."/>
            <person name="Momiyama H."/>
            <person name="Satoh N."/>
            <person name="Takami S."/>
            <person name="Terashima Y."/>
            <person name="Suzuki O."/>
            <person name="Nakagawa S."/>
            <person name="Senoh A."/>
            <person name="Mizoguchi H."/>
            <person name="Goto Y."/>
            <person name="Shimizu F."/>
            <person name="Wakebe H."/>
            <person name="Hishigaki H."/>
            <person name="Watanabe T."/>
            <person name="Sugiyama A."/>
            <person name="Takemoto M."/>
            <person name="Kawakami B."/>
            <person name="Yamazaki M."/>
            <person name="Watanabe K."/>
            <person name="Kumagai A."/>
            <person name="Itakura S."/>
            <person name="Fukuzumi Y."/>
            <person name="Fujimori Y."/>
            <person name="Komiyama M."/>
            <person name="Tashiro H."/>
            <person name="Tanigami A."/>
            <person name="Fujiwara T."/>
            <person name="Ono T."/>
            <person name="Yamada K."/>
            <person name="Fujii Y."/>
            <person name="Ozaki K."/>
            <person name="Hirao M."/>
            <person name="Ohmori Y."/>
            <person name="Kawabata A."/>
            <person name="Hikiji T."/>
            <person name="Kobatake N."/>
            <person name="Inagaki H."/>
            <person name="Ikema Y."/>
            <person name="Okamoto S."/>
            <person name="Okitani R."/>
            <person name="Kawakami T."/>
            <person name="Noguchi S."/>
            <person name="Itoh T."/>
            <person name="Shigeta K."/>
            <person name="Senba T."/>
            <person name="Matsumura K."/>
            <person name="Nakajima Y."/>
            <person name="Mizuno T."/>
            <person name="Morinaga M."/>
            <person name="Sasaki M."/>
            <person name="Togashi T."/>
            <person name="Oyama M."/>
            <person name="Hata H."/>
            <person name="Watanabe M."/>
            <person name="Komatsu T."/>
            <person name="Mizushima-Sugano J."/>
            <person name="Satoh T."/>
            <person name="Shirai Y."/>
            <person name="Takahashi Y."/>
            <person name="Nakagawa K."/>
            <person name="Okumura K."/>
            <person name="Nagase T."/>
            <person name="Nomura N."/>
            <person name="Kikuchi H."/>
            <person name="Masuho Y."/>
            <person name="Yamashita R."/>
            <person name="Nakai K."/>
            <person name="Yada T."/>
            <person name="Nakamura Y."/>
            <person name="Ohara O."/>
            <person name="Isogai T."/>
            <person name="Sugano S."/>
        </authorList>
    </citation>
    <scope>NUCLEOTIDE SEQUENCE [LARGE SCALE MRNA] (ISOFORM 2)</scope>
    <source>
        <tissue>Cerebellum</tissue>
    </source>
</reference>
<reference key="3">
    <citation type="journal article" date="2007" name="BMC Genomics">
        <title>The full-ORF clone resource of the German cDNA consortium.</title>
        <authorList>
            <person name="Bechtel S."/>
            <person name="Rosenfelder H."/>
            <person name="Duda A."/>
            <person name="Schmidt C.P."/>
            <person name="Ernst U."/>
            <person name="Wellenreuther R."/>
            <person name="Mehrle A."/>
            <person name="Schuster C."/>
            <person name="Bahr A."/>
            <person name="Bloecker H."/>
            <person name="Heubner D."/>
            <person name="Hoerlein A."/>
            <person name="Michel G."/>
            <person name="Wedler H."/>
            <person name="Koehrer K."/>
            <person name="Ottenwaelder B."/>
            <person name="Poustka A."/>
            <person name="Wiemann S."/>
            <person name="Schupp I."/>
        </authorList>
    </citation>
    <scope>NUCLEOTIDE SEQUENCE [LARGE SCALE MRNA] (ISOFORM 1)</scope>
    <source>
        <tissue>Melanoma</tissue>
    </source>
</reference>
<reference key="4">
    <citation type="journal article" date="2006" name="Nature">
        <title>Human chromosome 11 DNA sequence and analysis including novel gene identification.</title>
        <authorList>
            <person name="Taylor T.D."/>
            <person name="Noguchi H."/>
            <person name="Totoki Y."/>
            <person name="Toyoda A."/>
            <person name="Kuroki Y."/>
            <person name="Dewar K."/>
            <person name="Lloyd C."/>
            <person name="Itoh T."/>
            <person name="Takeda T."/>
            <person name="Kim D.-W."/>
            <person name="She X."/>
            <person name="Barlow K.F."/>
            <person name="Bloom T."/>
            <person name="Bruford E."/>
            <person name="Chang J.L."/>
            <person name="Cuomo C.A."/>
            <person name="Eichler E."/>
            <person name="FitzGerald M.G."/>
            <person name="Jaffe D.B."/>
            <person name="LaButti K."/>
            <person name="Nicol R."/>
            <person name="Park H.-S."/>
            <person name="Seaman C."/>
            <person name="Sougnez C."/>
            <person name="Yang X."/>
            <person name="Zimmer A.R."/>
            <person name="Zody M.C."/>
            <person name="Birren B.W."/>
            <person name="Nusbaum C."/>
            <person name="Fujiyama A."/>
            <person name="Hattori M."/>
            <person name="Rogers J."/>
            <person name="Lander E.S."/>
            <person name="Sakaki Y."/>
        </authorList>
    </citation>
    <scope>NUCLEOTIDE SEQUENCE [LARGE SCALE GENOMIC DNA]</scope>
</reference>
<reference key="5">
    <citation type="submission" date="2005-07" db="EMBL/GenBank/DDBJ databases">
        <authorList>
            <person name="Mural R.J."/>
            <person name="Istrail S."/>
            <person name="Sutton G.G."/>
            <person name="Florea L."/>
            <person name="Halpern A.L."/>
            <person name="Mobarry C.M."/>
            <person name="Lippert R."/>
            <person name="Walenz B."/>
            <person name="Shatkay H."/>
            <person name="Dew I."/>
            <person name="Miller J.R."/>
            <person name="Flanigan M.J."/>
            <person name="Edwards N.J."/>
            <person name="Bolanos R."/>
            <person name="Fasulo D."/>
            <person name="Halldorsson B.V."/>
            <person name="Hannenhalli S."/>
            <person name="Turner R."/>
            <person name="Yooseph S."/>
            <person name="Lu F."/>
            <person name="Nusskern D.R."/>
            <person name="Shue B.C."/>
            <person name="Zheng X.H."/>
            <person name="Zhong F."/>
            <person name="Delcher A.L."/>
            <person name="Huson D.H."/>
            <person name="Kravitz S.A."/>
            <person name="Mouchard L."/>
            <person name="Reinert K."/>
            <person name="Remington K.A."/>
            <person name="Clark A.G."/>
            <person name="Waterman M.S."/>
            <person name="Eichler E.E."/>
            <person name="Adams M.D."/>
            <person name="Hunkapiller M.W."/>
            <person name="Myers E.W."/>
            <person name="Venter J.C."/>
        </authorList>
    </citation>
    <scope>NUCLEOTIDE SEQUENCE [LARGE SCALE GENOMIC DNA]</scope>
</reference>
<reference key="6">
    <citation type="journal article" date="2004" name="Genome Res.">
        <title>The status, quality, and expansion of the NIH full-length cDNA project: the Mammalian Gene Collection (MGC).</title>
        <authorList>
            <consortium name="The MGC Project Team"/>
        </authorList>
    </citation>
    <scope>NUCLEOTIDE SEQUENCE [LARGE SCALE MRNA] (ISOFORM 1)</scope>
    <source>
        <tissue>Liver</tissue>
    </source>
</reference>
<reference key="7">
    <citation type="journal article" date="2011" name="BMC Syst. Biol.">
        <title>Initial characterization of the human central proteome.</title>
        <authorList>
            <person name="Burkard T.R."/>
            <person name="Planyavsky M."/>
            <person name="Kaupe I."/>
            <person name="Breitwieser F.P."/>
            <person name="Buerckstuemmer T."/>
            <person name="Bennett K.L."/>
            <person name="Superti-Furga G."/>
            <person name="Colinge J."/>
        </authorList>
    </citation>
    <scope>IDENTIFICATION BY MASS SPECTROMETRY [LARGE SCALE ANALYSIS]</scope>
</reference>
<reference key="8">
    <citation type="journal article" date="2013" name="J. Proteome Res.">
        <title>Toward a comprehensive characterization of a human cancer cell phosphoproteome.</title>
        <authorList>
            <person name="Zhou H."/>
            <person name="Di Palma S."/>
            <person name="Preisinger C."/>
            <person name="Peng M."/>
            <person name="Polat A.N."/>
            <person name="Heck A.J."/>
            <person name="Mohammed S."/>
        </authorList>
    </citation>
    <scope>IDENTIFICATION BY MASS SPECTROMETRY [LARGE SCALE ANALYSIS]</scope>
    <source>
        <tissue>Erythroleukemia</tissue>
    </source>
</reference>
<reference key="9">
    <citation type="journal article" date="2013" name="Mol. Biol. Cell">
        <title>Protein import and oxidative folding in the mitochondrial intermembrane space of intact mammalian cells.</title>
        <authorList>
            <person name="Fischer M."/>
            <person name="Horn S."/>
            <person name="Belkacemi A."/>
            <person name="Kojer K."/>
            <person name="Petrungaro C."/>
            <person name="Habich M."/>
            <person name="Ali M."/>
            <person name="Kuettner V."/>
            <person name="Bien M."/>
            <person name="Kauff F."/>
            <person name="Dengjel J."/>
            <person name="Herrmann J.M."/>
            <person name="Riemer J."/>
        </authorList>
    </citation>
    <scope>SUBCELLULAR LOCATION</scope>
    <scope>DISULFIDE BONDS</scope>
</reference>
<keyword id="KW-0025">Alternative splicing</keyword>
<keyword id="KW-1015">Disulfide bond</keyword>
<keyword id="KW-0496">Mitochondrion</keyword>
<keyword id="KW-1267">Proteomics identification</keyword>
<keyword id="KW-1185">Reference proteome</keyword>
<protein>
    <recommendedName>
        <fullName>Cytochrome c oxidase assembly factor 4 homolog, mitochondrial</fullName>
    </recommendedName>
    <alternativeName>
        <fullName>Coiled-coil-helix-coiled-coil-helix domain-containing protein 8</fullName>
    </alternativeName>
    <alternativeName>
        <fullName>E2-induced gene 2 protein</fullName>
    </alternativeName>
</protein>